<accession>Q17750</accession>
<proteinExistence type="inferred from homology"/>
<protein>
    <recommendedName>
        <fullName>E3 UFM1-protein ligase 1 homolog</fullName>
        <ecNumber evidence="1">2.3.2.-</ecNumber>
    </recommendedName>
    <alternativeName>
        <fullName evidence="3">E3 UFM1-protein transferase 1 homolog</fullName>
    </alternativeName>
</protein>
<gene>
    <name type="primary">ufl-1</name>
    <name type="ORF">C06G3.9</name>
</gene>
<keyword id="KW-1185">Reference proteome</keyword>
<keyword id="KW-0808">Transferase</keyword>
<keyword id="KW-0833">Ubl conjugation pathway</keyword>
<reference key="1">
    <citation type="journal article" date="1998" name="Science">
        <title>Genome sequence of the nematode C. elegans: a platform for investigating biology.</title>
        <authorList>
            <consortium name="The C. elegans sequencing consortium"/>
        </authorList>
    </citation>
    <scope>NUCLEOTIDE SEQUENCE [LARGE SCALE GENOMIC DNA]</scope>
    <source>
        <strain>Bristol N2</strain>
    </source>
</reference>
<sequence length="735" mass="81001">MTSWADIQKLASDLQRVQLSQSSKKLSEVNCIEVLQKLIASHRIDVVYTRDGHSYVTKNHLETEIKNECIAAGGRASLTDIAVALNIDFDHIEKTSRLIVSTDDEFTISNAEIFATEYVHRLRNELRTLLDEQGNQTTAALCKHWNLSSELLQSLLIEKLGSSDFQGVVDGDTIYTSSFLNARQLVLRAILIALTKITPISTIQKRVGLTPKRFWIAFENLQSLGEIPGTLIGSRTSPSCSYRPMMYDHLVKSCVLNQYRQNEFLEISTLKTLGVDAKPALEEVLGSSEFKKLVSMRSMFMTKELMDQCINAVQEDLQKSGISDVHLALQSLNLPLDTADEDEIGSKVANVEKDSHFAEGFVFKGAVLTEALRSIDKLLDVRAHEEVDRLEAEKKKQGGAKAAVKVQEETDDWGDGKKGGKGGKKNAKSVKGGSKSSAPSTSSNLSANISINSEELEIWLRESQSVPEEILSVIVEKLNQETTTLLRKKVQDIQAHQLVASVANSKKSLSAIGDKCRQLYDSFNTFETATSTFADPLGSDLRQYLLKTVGNEIALALLSYVMGVDNAHQLKEKQREETIENLPEMLRDPIRSVFASLKSTDDDALDKFHDAVYNCSAPSATSLALKKVDKKGRAEVGAKITAELHEQLCSQTEPATTLLLSVLYILAKAGRPTTASGKFVSQLVAQIKDLCPENVFDLLQACQKGVVTCIKNKGDEVAKEMLVNDISSLKQSIMP</sequence>
<organism>
    <name type="scientific">Caenorhabditis elegans</name>
    <dbReference type="NCBI Taxonomy" id="6239"/>
    <lineage>
        <taxon>Eukaryota</taxon>
        <taxon>Metazoa</taxon>
        <taxon>Ecdysozoa</taxon>
        <taxon>Nematoda</taxon>
        <taxon>Chromadorea</taxon>
        <taxon>Rhabditida</taxon>
        <taxon>Rhabditina</taxon>
        <taxon>Rhabditomorpha</taxon>
        <taxon>Rhabditoidea</taxon>
        <taxon>Rhabditidae</taxon>
        <taxon>Peloderinae</taxon>
        <taxon>Caenorhabditis</taxon>
    </lineage>
</organism>
<comment type="function">
    <text evidence="1">E3 UFM1-protein ligase that mediates ufmylation of target proteins.</text>
</comment>
<comment type="similarity">
    <text evidence="3">Belongs to the UFL1 family.</text>
</comment>
<dbReference type="EC" id="2.3.2.-" evidence="1"/>
<dbReference type="EMBL" id="FO080396">
    <property type="protein sequence ID" value="CCD83557.1"/>
    <property type="molecule type" value="Genomic_DNA"/>
</dbReference>
<dbReference type="PIR" id="T30096">
    <property type="entry name" value="T30096"/>
</dbReference>
<dbReference type="RefSeq" id="NP_501090.1">
    <property type="nucleotide sequence ID" value="NM_068689.7"/>
</dbReference>
<dbReference type="SMR" id="Q17750"/>
<dbReference type="BioGRID" id="42590">
    <property type="interactions" value="9"/>
</dbReference>
<dbReference type="FunCoup" id="Q17750">
    <property type="interactions" value="2992"/>
</dbReference>
<dbReference type="STRING" id="6239.C06G3.9.2"/>
<dbReference type="PaxDb" id="6239-C06G3.9.1"/>
<dbReference type="PeptideAtlas" id="Q17750"/>
<dbReference type="EnsemblMetazoa" id="C06G3.9.1">
    <property type="protein sequence ID" value="C06G3.9.1"/>
    <property type="gene ID" value="WBGene00015555"/>
</dbReference>
<dbReference type="GeneID" id="177471"/>
<dbReference type="KEGG" id="cel:CELE_C06G3.9"/>
<dbReference type="UCSC" id="C06G3.9.1">
    <property type="organism name" value="c. elegans"/>
</dbReference>
<dbReference type="AGR" id="WB:WBGene00015555"/>
<dbReference type="CTD" id="177471"/>
<dbReference type="WormBase" id="C06G3.9">
    <property type="protein sequence ID" value="CE07985"/>
    <property type="gene ID" value="WBGene00015555"/>
    <property type="gene designation" value="ufl-1"/>
</dbReference>
<dbReference type="eggNOG" id="KOG2235">
    <property type="taxonomic scope" value="Eukaryota"/>
</dbReference>
<dbReference type="GeneTree" id="ENSGT00390000002112"/>
<dbReference type="HOGENOM" id="CLU_422267_0_0_1"/>
<dbReference type="InParanoid" id="Q17750"/>
<dbReference type="OMA" id="FPKDFWA"/>
<dbReference type="OrthoDB" id="10258297at2759"/>
<dbReference type="PhylomeDB" id="Q17750"/>
<dbReference type="Reactome" id="R-CEL-983168">
    <property type="pathway name" value="Antigen processing: Ubiquitination &amp; Proteasome degradation"/>
</dbReference>
<dbReference type="PRO" id="PR:Q17750"/>
<dbReference type="Proteomes" id="UP000001940">
    <property type="component" value="Chromosome IV"/>
</dbReference>
<dbReference type="Bgee" id="WBGene00015555">
    <property type="expression patterns" value="Expressed in germ line (C elegans) and 4 other cell types or tissues"/>
</dbReference>
<dbReference type="GO" id="GO:0005789">
    <property type="term" value="C:endoplasmic reticulum membrane"/>
    <property type="evidence" value="ECO:0000318"/>
    <property type="project" value="GO_Central"/>
</dbReference>
<dbReference type="GO" id="GO:0061666">
    <property type="term" value="F:UFM1 ligase activity"/>
    <property type="evidence" value="ECO:0007669"/>
    <property type="project" value="InterPro"/>
</dbReference>
<dbReference type="GO" id="GO:0071568">
    <property type="term" value="F:UFM1 transferase activity"/>
    <property type="evidence" value="ECO:0000318"/>
    <property type="project" value="GO_Central"/>
</dbReference>
<dbReference type="GO" id="GO:0032088">
    <property type="term" value="P:negative regulation of NF-kappaB transcription factor activity"/>
    <property type="evidence" value="ECO:0000250"/>
    <property type="project" value="UniProtKB"/>
</dbReference>
<dbReference type="GO" id="GO:0071569">
    <property type="term" value="P:protein ufmylation"/>
    <property type="evidence" value="ECO:0007669"/>
    <property type="project" value="InterPro"/>
</dbReference>
<dbReference type="GO" id="GO:0034976">
    <property type="term" value="P:response to endoplasmic reticulum stress"/>
    <property type="evidence" value="ECO:0000318"/>
    <property type="project" value="GO_Central"/>
</dbReference>
<dbReference type="GO" id="GO:0061709">
    <property type="term" value="P:reticulophagy"/>
    <property type="evidence" value="ECO:0000318"/>
    <property type="project" value="GO_Central"/>
</dbReference>
<dbReference type="InterPro" id="IPR018611">
    <property type="entry name" value="Ufl1"/>
</dbReference>
<dbReference type="InterPro" id="IPR056761">
    <property type="entry name" value="Ufl1-like_C"/>
</dbReference>
<dbReference type="InterPro" id="IPR056580">
    <property type="entry name" value="Ufl1_dom"/>
</dbReference>
<dbReference type="InterPro" id="IPR056579">
    <property type="entry name" value="Ufl1_N"/>
</dbReference>
<dbReference type="PANTHER" id="PTHR31057">
    <property type="entry name" value="E3 UFM1-PROTEIN LIGASE 1"/>
    <property type="match status" value="1"/>
</dbReference>
<dbReference type="PANTHER" id="PTHR31057:SF0">
    <property type="entry name" value="E3 UFM1-PROTEIN LIGASE 1"/>
    <property type="match status" value="1"/>
</dbReference>
<dbReference type="Pfam" id="PF09743">
    <property type="entry name" value="E3_UFM1_ligase"/>
    <property type="match status" value="1"/>
</dbReference>
<dbReference type="Pfam" id="PF23659">
    <property type="entry name" value="UFL1"/>
    <property type="match status" value="1"/>
</dbReference>
<dbReference type="Pfam" id="PF25041">
    <property type="entry name" value="UFL1_C"/>
    <property type="match status" value="1"/>
</dbReference>
<evidence type="ECO:0000250" key="1">
    <source>
        <dbReference type="UniProtKB" id="O94874"/>
    </source>
</evidence>
<evidence type="ECO:0000256" key="2">
    <source>
        <dbReference type="SAM" id="MobiDB-lite"/>
    </source>
</evidence>
<evidence type="ECO:0000305" key="3"/>
<feature type="chain" id="PRO_0000391893" description="E3 UFM1-protein ligase 1 homolog">
    <location>
        <begin position="1"/>
        <end position="735"/>
    </location>
</feature>
<feature type="region of interest" description="Disordered" evidence="2">
    <location>
        <begin position="389"/>
        <end position="445"/>
    </location>
</feature>
<feature type="compositionally biased region" description="Basic residues" evidence="2">
    <location>
        <begin position="419"/>
        <end position="428"/>
    </location>
</feature>
<feature type="compositionally biased region" description="Low complexity" evidence="2">
    <location>
        <begin position="429"/>
        <end position="445"/>
    </location>
</feature>
<name>UFL1_CAEEL</name>